<organism>
    <name type="scientific">Clostridium botulinum (strain 657 / Type Ba4)</name>
    <dbReference type="NCBI Taxonomy" id="515621"/>
    <lineage>
        <taxon>Bacteria</taxon>
        <taxon>Bacillati</taxon>
        <taxon>Bacillota</taxon>
        <taxon>Clostridia</taxon>
        <taxon>Eubacteriales</taxon>
        <taxon>Clostridiaceae</taxon>
        <taxon>Clostridium</taxon>
    </lineage>
</organism>
<protein>
    <recommendedName>
        <fullName evidence="1">ATP synthase subunit delta</fullName>
    </recommendedName>
    <alternativeName>
        <fullName evidence="1">ATP synthase F(1) sector subunit delta</fullName>
    </alternativeName>
    <alternativeName>
        <fullName evidence="1">F-type ATPase subunit delta</fullName>
        <shortName evidence="1">F-ATPase subunit delta</shortName>
    </alternativeName>
</protein>
<feature type="chain" id="PRO_1000215230" description="ATP synthase subunit delta">
    <location>
        <begin position="1"/>
        <end position="179"/>
    </location>
</feature>
<comment type="function">
    <text evidence="1">F(1)F(0) ATP synthase produces ATP from ADP in the presence of a proton or sodium gradient. F-type ATPases consist of two structural domains, F(1) containing the extramembraneous catalytic core and F(0) containing the membrane proton channel, linked together by a central stalk and a peripheral stalk. During catalysis, ATP synthesis in the catalytic domain of F(1) is coupled via a rotary mechanism of the central stalk subunits to proton translocation.</text>
</comment>
<comment type="function">
    <text evidence="1">This protein is part of the stalk that links CF(0) to CF(1). It either transmits conformational changes from CF(0) to CF(1) or is implicated in proton conduction.</text>
</comment>
<comment type="subunit">
    <text evidence="1">F-type ATPases have 2 components, F(1) - the catalytic core - and F(0) - the membrane proton channel. F(1) has five subunits: alpha(3), beta(3), gamma(1), delta(1), epsilon(1). F(0) has three main subunits: a(1), b(2) and c(10-14). The alpha and beta chains form an alternating ring which encloses part of the gamma chain. F(1) is attached to F(0) by a central stalk formed by the gamma and epsilon chains, while a peripheral stalk is formed by the delta and b chains.</text>
</comment>
<comment type="subcellular location">
    <subcellularLocation>
        <location evidence="1">Cell membrane</location>
        <topology evidence="1">Peripheral membrane protein</topology>
    </subcellularLocation>
</comment>
<comment type="similarity">
    <text evidence="1">Belongs to the ATPase delta chain family.</text>
</comment>
<accession>C3KYJ0</accession>
<reference key="1">
    <citation type="submission" date="2008-05" db="EMBL/GenBank/DDBJ databases">
        <title>Genome sequence of Clostridium botulinum Ba4 strain 657.</title>
        <authorList>
            <person name="Shrivastava S."/>
            <person name="Brown J.L."/>
            <person name="Bruce D."/>
            <person name="Detter C."/>
            <person name="Munk C."/>
            <person name="Smith L.A."/>
            <person name="Smith T.J."/>
            <person name="Sutton G."/>
            <person name="Brettin T.S."/>
        </authorList>
    </citation>
    <scope>NUCLEOTIDE SEQUENCE [LARGE SCALE GENOMIC DNA]</scope>
    <source>
        <strain>657 / Type Ba4</strain>
    </source>
</reference>
<evidence type="ECO:0000255" key="1">
    <source>
        <dbReference type="HAMAP-Rule" id="MF_01416"/>
    </source>
</evidence>
<gene>
    <name evidence="1" type="primary">atpH</name>
    <name type="ordered locus">CLJ_B0192</name>
</gene>
<keyword id="KW-0066">ATP synthesis</keyword>
<keyword id="KW-1003">Cell membrane</keyword>
<keyword id="KW-0139">CF(1)</keyword>
<keyword id="KW-0375">Hydrogen ion transport</keyword>
<keyword id="KW-0406">Ion transport</keyword>
<keyword id="KW-0472">Membrane</keyword>
<keyword id="KW-0813">Transport</keyword>
<proteinExistence type="inferred from homology"/>
<sequence length="179" mass="21273">MYEYLDRRYALALYEVAEENNKVDEYLKDLKEVVNIIKNSEDICKILKHPEINTSRKKEIFTELFKDKVDDKILSFLLVLIEKDRILYLEEKLKEMEKIYLEKNNMILANVKTVIPLLKEEREELIEKLGNKYNKKIILEEEIDKSIIGGVYVRVGDDVLDGTLSTRLKDIKKMMLKRE</sequence>
<dbReference type="EMBL" id="CP001083">
    <property type="protein sequence ID" value="ACQ53301.1"/>
    <property type="molecule type" value="Genomic_DNA"/>
</dbReference>
<dbReference type="RefSeq" id="WP_003360552.1">
    <property type="nucleotide sequence ID" value="NC_012658.1"/>
</dbReference>
<dbReference type="SMR" id="C3KYJ0"/>
<dbReference type="KEGG" id="cbi:CLJ_B0192"/>
<dbReference type="HOGENOM" id="CLU_085114_4_0_9"/>
<dbReference type="Proteomes" id="UP000002333">
    <property type="component" value="Chromosome"/>
</dbReference>
<dbReference type="GO" id="GO:0005886">
    <property type="term" value="C:plasma membrane"/>
    <property type="evidence" value="ECO:0007669"/>
    <property type="project" value="UniProtKB-SubCell"/>
</dbReference>
<dbReference type="GO" id="GO:0045259">
    <property type="term" value="C:proton-transporting ATP synthase complex"/>
    <property type="evidence" value="ECO:0007669"/>
    <property type="project" value="UniProtKB-KW"/>
</dbReference>
<dbReference type="GO" id="GO:0046933">
    <property type="term" value="F:proton-transporting ATP synthase activity, rotational mechanism"/>
    <property type="evidence" value="ECO:0007669"/>
    <property type="project" value="UniProtKB-UniRule"/>
</dbReference>
<dbReference type="Gene3D" id="1.10.520.20">
    <property type="entry name" value="N-terminal domain of the delta subunit of the F1F0-ATP synthase"/>
    <property type="match status" value="1"/>
</dbReference>
<dbReference type="HAMAP" id="MF_01416">
    <property type="entry name" value="ATP_synth_delta_bact"/>
    <property type="match status" value="1"/>
</dbReference>
<dbReference type="InterPro" id="IPR026015">
    <property type="entry name" value="ATP_synth_OSCP/delta_N_sf"/>
</dbReference>
<dbReference type="InterPro" id="IPR020781">
    <property type="entry name" value="ATPase_OSCP/d_CS"/>
</dbReference>
<dbReference type="InterPro" id="IPR000711">
    <property type="entry name" value="ATPase_OSCP/dsu"/>
</dbReference>
<dbReference type="NCBIfam" id="TIGR01145">
    <property type="entry name" value="ATP_synt_delta"/>
    <property type="match status" value="1"/>
</dbReference>
<dbReference type="NCBIfam" id="NF004403">
    <property type="entry name" value="PRK05758.2-4"/>
    <property type="match status" value="1"/>
</dbReference>
<dbReference type="PANTHER" id="PTHR11910">
    <property type="entry name" value="ATP SYNTHASE DELTA CHAIN"/>
    <property type="match status" value="1"/>
</dbReference>
<dbReference type="Pfam" id="PF00213">
    <property type="entry name" value="OSCP"/>
    <property type="match status" value="1"/>
</dbReference>
<dbReference type="PRINTS" id="PR00125">
    <property type="entry name" value="ATPASEDELTA"/>
</dbReference>
<dbReference type="SUPFAM" id="SSF47928">
    <property type="entry name" value="N-terminal domain of the delta subunit of the F1F0-ATP synthase"/>
    <property type="match status" value="1"/>
</dbReference>
<dbReference type="SUPFAM" id="SSF160527">
    <property type="entry name" value="V-type ATPase subunit E-like"/>
    <property type="match status" value="1"/>
</dbReference>
<dbReference type="PROSITE" id="PS00389">
    <property type="entry name" value="ATPASE_DELTA"/>
    <property type="match status" value="1"/>
</dbReference>
<name>ATPD_CLOB6</name>